<proteinExistence type="inferred from homology"/>
<gene>
    <name evidence="1" type="primary">ftsW</name>
    <name type="ordered locus">Tgr7_0768</name>
</gene>
<organism>
    <name type="scientific">Thioalkalivibrio sulfidiphilus (strain HL-EbGR7)</name>
    <dbReference type="NCBI Taxonomy" id="396588"/>
    <lineage>
        <taxon>Bacteria</taxon>
        <taxon>Pseudomonadati</taxon>
        <taxon>Pseudomonadota</taxon>
        <taxon>Gammaproteobacteria</taxon>
        <taxon>Chromatiales</taxon>
        <taxon>Ectothiorhodospiraceae</taxon>
        <taxon>Thioalkalivibrio</taxon>
    </lineage>
</organism>
<dbReference type="EC" id="2.4.99.28" evidence="1"/>
<dbReference type="EMBL" id="CP001339">
    <property type="protein sequence ID" value="ACL71860.1"/>
    <property type="molecule type" value="Genomic_DNA"/>
</dbReference>
<dbReference type="RefSeq" id="WP_012637348.1">
    <property type="nucleotide sequence ID" value="NC_011901.1"/>
</dbReference>
<dbReference type="SMR" id="B8GMM8"/>
<dbReference type="STRING" id="396588.Tgr7_0768"/>
<dbReference type="KEGG" id="tgr:Tgr7_0768"/>
<dbReference type="eggNOG" id="COG0772">
    <property type="taxonomic scope" value="Bacteria"/>
</dbReference>
<dbReference type="HOGENOM" id="CLU_029243_1_1_6"/>
<dbReference type="OrthoDB" id="9768187at2"/>
<dbReference type="UniPathway" id="UPA00219"/>
<dbReference type="Proteomes" id="UP000002383">
    <property type="component" value="Chromosome"/>
</dbReference>
<dbReference type="GO" id="GO:0032153">
    <property type="term" value="C:cell division site"/>
    <property type="evidence" value="ECO:0007669"/>
    <property type="project" value="UniProtKB-UniRule"/>
</dbReference>
<dbReference type="GO" id="GO:0005886">
    <property type="term" value="C:plasma membrane"/>
    <property type="evidence" value="ECO:0007669"/>
    <property type="project" value="UniProtKB-SubCell"/>
</dbReference>
<dbReference type="GO" id="GO:0015648">
    <property type="term" value="F:lipid-linked peptidoglycan transporter activity"/>
    <property type="evidence" value="ECO:0007669"/>
    <property type="project" value="TreeGrafter"/>
</dbReference>
<dbReference type="GO" id="GO:0008955">
    <property type="term" value="F:peptidoglycan glycosyltransferase activity"/>
    <property type="evidence" value="ECO:0007669"/>
    <property type="project" value="UniProtKB-UniRule"/>
</dbReference>
<dbReference type="GO" id="GO:0071555">
    <property type="term" value="P:cell wall organization"/>
    <property type="evidence" value="ECO:0007669"/>
    <property type="project" value="UniProtKB-KW"/>
</dbReference>
<dbReference type="GO" id="GO:0043093">
    <property type="term" value="P:FtsZ-dependent cytokinesis"/>
    <property type="evidence" value="ECO:0007669"/>
    <property type="project" value="UniProtKB-UniRule"/>
</dbReference>
<dbReference type="GO" id="GO:0009252">
    <property type="term" value="P:peptidoglycan biosynthetic process"/>
    <property type="evidence" value="ECO:0007669"/>
    <property type="project" value="UniProtKB-UniRule"/>
</dbReference>
<dbReference type="GO" id="GO:0008360">
    <property type="term" value="P:regulation of cell shape"/>
    <property type="evidence" value="ECO:0007669"/>
    <property type="project" value="UniProtKB-KW"/>
</dbReference>
<dbReference type="HAMAP" id="MF_00913">
    <property type="entry name" value="PGT_FtsW_proteobact"/>
    <property type="match status" value="1"/>
</dbReference>
<dbReference type="InterPro" id="IPR018365">
    <property type="entry name" value="Cell_cycle_FtsW-rel_CS"/>
</dbReference>
<dbReference type="InterPro" id="IPR013437">
    <property type="entry name" value="FtsW"/>
</dbReference>
<dbReference type="InterPro" id="IPR001182">
    <property type="entry name" value="FtsW/RodA"/>
</dbReference>
<dbReference type="NCBIfam" id="TIGR02614">
    <property type="entry name" value="ftsW"/>
    <property type="match status" value="1"/>
</dbReference>
<dbReference type="PANTHER" id="PTHR30474">
    <property type="entry name" value="CELL CYCLE PROTEIN"/>
    <property type="match status" value="1"/>
</dbReference>
<dbReference type="PANTHER" id="PTHR30474:SF2">
    <property type="entry name" value="PEPTIDOGLYCAN GLYCOSYLTRANSFERASE FTSW-RELATED"/>
    <property type="match status" value="1"/>
</dbReference>
<dbReference type="Pfam" id="PF01098">
    <property type="entry name" value="FTSW_RODA_SPOVE"/>
    <property type="match status" value="1"/>
</dbReference>
<dbReference type="PROSITE" id="PS00428">
    <property type="entry name" value="FTSW_RODA_SPOVE"/>
    <property type="match status" value="1"/>
</dbReference>
<protein>
    <recommendedName>
        <fullName evidence="1">Probable peptidoglycan glycosyltransferase FtsW</fullName>
        <shortName evidence="1">PGT</shortName>
        <ecNumber evidence="1">2.4.99.28</ecNumber>
    </recommendedName>
    <alternativeName>
        <fullName evidence="1">Cell division protein FtsW</fullName>
    </alternativeName>
    <alternativeName>
        <fullName evidence="1">Cell wall polymerase</fullName>
    </alternativeName>
    <alternativeName>
        <fullName evidence="1">Peptidoglycan polymerase</fullName>
        <shortName evidence="1">PG polymerase</shortName>
    </alternativeName>
</protein>
<feature type="chain" id="PRO_0000415215" description="Probable peptidoglycan glycosyltransferase FtsW">
    <location>
        <begin position="1"/>
        <end position="400"/>
    </location>
</feature>
<feature type="transmembrane region" description="Helical" evidence="1">
    <location>
        <begin position="30"/>
        <end position="50"/>
    </location>
</feature>
<feature type="transmembrane region" description="Helical" evidence="1">
    <location>
        <begin position="65"/>
        <end position="84"/>
    </location>
</feature>
<feature type="transmembrane region" description="Helical" evidence="1">
    <location>
        <begin position="92"/>
        <end position="112"/>
    </location>
</feature>
<feature type="transmembrane region" description="Helical" evidence="1">
    <location>
        <begin position="123"/>
        <end position="143"/>
    </location>
</feature>
<feature type="transmembrane region" description="Helical" evidence="1">
    <location>
        <begin position="157"/>
        <end position="177"/>
    </location>
</feature>
<feature type="transmembrane region" description="Helical" evidence="1">
    <location>
        <begin position="179"/>
        <end position="199"/>
    </location>
</feature>
<feature type="transmembrane region" description="Helical" evidence="1">
    <location>
        <begin position="201"/>
        <end position="221"/>
    </location>
</feature>
<feature type="transmembrane region" description="Helical" evidence="1">
    <location>
        <begin position="247"/>
        <end position="267"/>
    </location>
</feature>
<feature type="transmembrane region" description="Helical" evidence="1">
    <location>
        <begin position="280"/>
        <end position="300"/>
    </location>
</feature>
<feature type="transmembrane region" description="Helical" evidence="1">
    <location>
        <begin position="321"/>
        <end position="341"/>
    </location>
</feature>
<feature type="transmembrane region" description="Helical" evidence="1">
    <location>
        <begin position="356"/>
        <end position="376"/>
    </location>
</feature>
<keyword id="KW-0131">Cell cycle</keyword>
<keyword id="KW-0132">Cell division</keyword>
<keyword id="KW-0997">Cell inner membrane</keyword>
<keyword id="KW-1003">Cell membrane</keyword>
<keyword id="KW-0133">Cell shape</keyword>
<keyword id="KW-0961">Cell wall biogenesis/degradation</keyword>
<keyword id="KW-0328">Glycosyltransferase</keyword>
<keyword id="KW-0472">Membrane</keyword>
<keyword id="KW-0573">Peptidoglycan synthesis</keyword>
<keyword id="KW-1185">Reference proteome</keyword>
<keyword id="KW-0808">Transferase</keyword>
<keyword id="KW-0812">Transmembrane</keyword>
<keyword id="KW-1133">Transmembrane helix</keyword>
<accession>B8GMM8</accession>
<name>FTSW_THISH</name>
<reference key="1">
    <citation type="journal article" date="2011" name="Stand. Genomic Sci.">
        <title>Complete genome sequence of 'Thioalkalivibrio sulfidophilus' HL-EbGr7.</title>
        <authorList>
            <person name="Muyzer G."/>
            <person name="Sorokin D.Y."/>
            <person name="Mavromatis K."/>
            <person name="Lapidus A."/>
            <person name="Clum A."/>
            <person name="Ivanova N."/>
            <person name="Pati A."/>
            <person name="d'Haeseleer P."/>
            <person name="Woyke T."/>
            <person name="Kyrpides N.C."/>
        </authorList>
    </citation>
    <scope>NUCLEOTIDE SEQUENCE [LARGE SCALE GENOMIC DNA]</scope>
    <source>
        <strain>HL-EbGR7</strain>
    </source>
</reference>
<sequence>MSAVDIQATRDAGQQLQVRLAQRLDLGLTLSVLALLGLGLVMVASASIGIADRNLGDPLYFLKRQAAYVVLGLAAASLAYRIRLAYWEASAGLLLGFAYFLLILVLVPGVGVTVNGSTRWLSLGLFNLQVSEVAKLLFTLYLAGYLTRHGRAVREQFAGFLRPMLLLSGAALLLLMEPDFGAAVVLMAIGLALLFLAGAKLWQFALLVGTVAAALAMLAITTPYRMARLTAFLDPWNDPFNSGFQLTQSLIAIGSGSWFGVGLGASVQKLFYLPEAHNDFLFAVLAEELGLVGITVVVLLYGWFLWRSFGIGRAAEQAGQLFGAYLAYGVGVWVSLQAFINMGVNMGLLPTKGLTLPLMSYGGSSMLMTCAAVGLLLRVHRETVESGPLRVGRVTGGRGA</sequence>
<evidence type="ECO:0000255" key="1">
    <source>
        <dbReference type="HAMAP-Rule" id="MF_00913"/>
    </source>
</evidence>
<comment type="function">
    <text evidence="1">Peptidoglycan polymerase that is essential for cell division.</text>
</comment>
<comment type="catalytic activity">
    <reaction evidence="1">
        <text>[GlcNAc-(1-&gt;4)-Mur2Ac(oyl-L-Ala-gamma-D-Glu-L-Lys-D-Ala-D-Ala)](n)-di-trans,octa-cis-undecaprenyl diphosphate + beta-D-GlcNAc-(1-&gt;4)-Mur2Ac(oyl-L-Ala-gamma-D-Glu-L-Lys-D-Ala-D-Ala)-di-trans,octa-cis-undecaprenyl diphosphate = [GlcNAc-(1-&gt;4)-Mur2Ac(oyl-L-Ala-gamma-D-Glu-L-Lys-D-Ala-D-Ala)](n+1)-di-trans,octa-cis-undecaprenyl diphosphate + di-trans,octa-cis-undecaprenyl diphosphate + H(+)</text>
        <dbReference type="Rhea" id="RHEA:23708"/>
        <dbReference type="Rhea" id="RHEA-COMP:9602"/>
        <dbReference type="Rhea" id="RHEA-COMP:9603"/>
        <dbReference type="ChEBI" id="CHEBI:15378"/>
        <dbReference type="ChEBI" id="CHEBI:58405"/>
        <dbReference type="ChEBI" id="CHEBI:60033"/>
        <dbReference type="ChEBI" id="CHEBI:78435"/>
        <dbReference type="EC" id="2.4.99.28"/>
    </reaction>
</comment>
<comment type="pathway">
    <text evidence="1">Cell wall biogenesis; peptidoglycan biosynthesis.</text>
</comment>
<comment type="subcellular location">
    <subcellularLocation>
        <location evidence="1">Cell inner membrane</location>
        <topology evidence="1">Multi-pass membrane protein</topology>
    </subcellularLocation>
    <text evidence="1">Localizes to the division septum.</text>
</comment>
<comment type="similarity">
    <text evidence="1">Belongs to the SEDS family. FtsW subfamily.</text>
</comment>